<organism>
    <name type="scientific">Bacillus subtilis (strain 168)</name>
    <dbReference type="NCBI Taxonomy" id="224308"/>
    <lineage>
        <taxon>Bacteria</taxon>
        <taxon>Bacillati</taxon>
        <taxon>Bacillota</taxon>
        <taxon>Bacilli</taxon>
        <taxon>Bacillales</taxon>
        <taxon>Bacillaceae</taxon>
        <taxon>Bacillus</taxon>
    </lineage>
</organism>
<feature type="initiator methionine" description="Removed" evidence="1">
    <location>
        <position position="1"/>
    </location>
</feature>
<feature type="chain" id="PRO_0000056934" description="Asparagine synthetase [glutamine-hydrolyzing] 3">
    <location>
        <begin position="2"/>
        <end position="614"/>
    </location>
</feature>
<feature type="domain" description="Glutamine amidotransferase type-2" evidence="2">
    <location>
        <begin position="2"/>
        <end position="216"/>
    </location>
</feature>
<feature type="active site" description="For GATase activity" evidence="1">
    <location>
        <position position="2"/>
    </location>
</feature>
<feature type="binding site" evidence="1">
    <location>
        <begin position="50"/>
        <end position="54"/>
    </location>
    <ligand>
        <name>L-glutamine</name>
        <dbReference type="ChEBI" id="CHEBI:58359"/>
    </ligand>
</feature>
<feature type="binding site" evidence="1">
    <location>
        <begin position="77"/>
        <end position="79"/>
    </location>
    <ligand>
        <name>L-glutamine</name>
        <dbReference type="ChEBI" id="CHEBI:58359"/>
    </ligand>
</feature>
<feature type="binding site" evidence="1">
    <location>
        <position position="102"/>
    </location>
    <ligand>
        <name>L-glutamine</name>
        <dbReference type="ChEBI" id="CHEBI:58359"/>
    </ligand>
</feature>
<feature type="binding site" evidence="1">
    <location>
        <begin position="377"/>
        <end position="378"/>
    </location>
    <ligand>
        <name>ATP</name>
        <dbReference type="ChEBI" id="CHEBI:30616"/>
    </ligand>
</feature>
<feature type="site" description="Important for beta-aspartyl-AMP intermediate formation" evidence="1">
    <location>
        <position position="379"/>
    </location>
</feature>
<gene>
    <name type="primary">asnO</name>
    <name type="synonym">yisO</name>
    <name type="synonym">yucB</name>
    <name type="ordered locus">BSU10790</name>
</gene>
<protein>
    <recommendedName>
        <fullName>Asparagine synthetase [glutamine-hydrolyzing] 3</fullName>
        <ecNumber>6.3.5.4</ecNumber>
    </recommendedName>
</protein>
<evidence type="ECO:0000250" key="1"/>
<evidence type="ECO:0000255" key="2">
    <source>
        <dbReference type="PROSITE-ProRule" id="PRU00609"/>
    </source>
</evidence>
<evidence type="ECO:0000305" key="3"/>
<name>ASNO_BACSU</name>
<dbReference type="EC" id="6.3.5.4"/>
<dbReference type="EMBL" id="Z93940">
    <property type="protein sequence ID" value="CAB07965.1"/>
    <property type="molecule type" value="Genomic_DNA"/>
</dbReference>
<dbReference type="EMBL" id="Y09476">
    <property type="protein sequence ID" value="CAA70643.1"/>
    <property type="status" value="ALT_INIT"/>
    <property type="molecule type" value="Genomic_DNA"/>
</dbReference>
<dbReference type="EMBL" id="AL009126">
    <property type="protein sequence ID" value="CAB12919.2"/>
    <property type="molecule type" value="Genomic_DNA"/>
</dbReference>
<dbReference type="PIR" id="F69837">
    <property type="entry name" value="F69837"/>
</dbReference>
<dbReference type="RefSeq" id="NP_388960.2">
    <property type="nucleotide sequence ID" value="NC_000964.3"/>
</dbReference>
<dbReference type="SMR" id="O05272"/>
<dbReference type="FunCoup" id="O05272">
    <property type="interactions" value="428"/>
</dbReference>
<dbReference type="STRING" id="224308.BSU10790"/>
<dbReference type="PaxDb" id="224308-BSU10790"/>
<dbReference type="EnsemblBacteria" id="CAB12919">
    <property type="protein sequence ID" value="CAB12919"/>
    <property type="gene ID" value="BSU_10790"/>
</dbReference>
<dbReference type="GeneID" id="939783"/>
<dbReference type="KEGG" id="bsu:BSU10790"/>
<dbReference type="PATRIC" id="fig|224308.179.peg.1160"/>
<dbReference type="eggNOG" id="COG0367">
    <property type="taxonomic scope" value="Bacteria"/>
</dbReference>
<dbReference type="InParanoid" id="O05272"/>
<dbReference type="OrthoDB" id="9763290at2"/>
<dbReference type="PhylomeDB" id="O05272"/>
<dbReference type="BioCyc" id="BSUB:BSU10790-MONOMER"/>
<dbReference type="UniPathway" id="UPA00134">
    <property type="reaction ID" value="UER00195"/>
</dbReference>
<dbReference type="Proteomes" id="UP000001570">
    <property type="component" value="Chromosome"/>
</dbReference>
<dbReference type="GO" id="GO:0004066">
    <property type="term" value="F:asparagine synthase (glutamine-hydrolyzing) activity"/>
    <property type="evidence" value="ECO:0007669"/>
    <property type="project" value="UniProtKB-EC"/>
</dbReference>
<dbReference type="GO" id="GO:0005524">
    <property type="term" value="F:ATP binding"/>
    <property type="evidence" value="ECO:0007669"/>
    <property type="project" value="UniProtKB-KW"/>
</dbReference>
<dbReference type="GO" id="GO:0070981">
    <property type="term" value="P:L-asparagine biosynthetic process"/>
    <property type="evidence" value="ECO:0007669"/>
    <property type="project" value="UniProtKB-UniPathway"/>
</dbReference>
<dbReference type="GO" id="GO:0030435">
    <property type="term" value="P:sporulation resulting in formation of a cellular spore"/>
    <property type="evidence" value="ECO:0007669"/>
    <property type="project" value="UniProtKB-KW"/>
</dbReference>
<dbReference type="CDD" id="cd01991">
    <property type="entry name" value="Asn_synthase_B_C"/>
    <property type="match status" value="1"/>
</dbReference>
<dbReference type="CDD" id="cd00712">
    <property type="entry name" value="AsnB"/>
    <property type="match status" value="1"/>
</dbReference>
<dbReference type="Gene3D" id="3.60.20.10">
    <property type="entry name" value="Glutamine Phosphoribosylpyrophosphate, subunit 1, domain 1"/>
    <property type="match status" value="1"/>
</dbReference>
<dbReference type="Gene3D" id="3.40.50.620">
    <property type="entry name" value="HUPs"/>
    <property type="match status" value="1"/>
</dbReference>
<dbReference type="InterPro" id="IPR006426">
    <property type="entry name" value="Asn_synth_AEB"/>
</dbReference>
<dbReference type="InterPro" id="IPR001962">
    <property type="entry name" value="Asn_synthase"/>
</dbReference>
<dbReference type="InterPro" id="IPR051786">
    <property type="entry name" value="ASN_synthetase/amidase"/>
</dbReference>
<dbReference type="InterPro" id="IPR033738">
    <property type="entry name" value="AsnB_N"/>
</dbReference>
<dbReference type="InterPro" id="IPR017932">
    <property type="entry name" value="GATase_2_dom"/>
</dbReference>
<dbReference type="InterPro" id="IPR029055">
    <property type="entry name" value="Ntn_hydrolases_N"/>
</dbReference>
<dbReference type="InterPro" id="IPR014729">
    <property type="entry name" value="Rossmann-like_a/b/a_fold"/>
</dbReference>
<dbReference type="NCBIfam" id="TIGR01536">
    <property type="entry name" value="asn_synth_AEB"/>
    <property type="match status" value="1"/>
</dbReference>
<dbReference type="PANTHER" id="PTHR43284:SF1">
    <property type="entry name" value="ASPARAGINE SYNTHETASE"/>
    <property type="match status" value="1"/>
</dbReference>
<dbReference type="PANTHER" id="PTHR43284">
    <property type="entry name" value="ASPARAGINE SYNTHETASE (GLUTAMINE-HYDROLYZING)"/>
    <property type="match status" value="1"/>
</dbReference>
<dbReference type="Pfam" id="PF00733">
    <property type="entry name" value="Asn_synthase"/>
    <property type="match status" value="1"/>
</dbReference>
<dbReference type="Pfam" id="PF13537">
    <property type="entry name" value="GATase_7"/>
    <property type="match status" value="1"/>
</dbReference>
<dbReference type="PIRSF" id="PIRSF001589">
    <property type="entry name" value="Asn_synthetase_glu-h"/>
    <property type="match status" value="1"/>
</dbReference>
<dbReference type="SUPFAM" id="SSF52402">
    <property type="entry name" value="Adenine nucleotide alpha hydrolases-like"/>
    <property type="match status" value="1"/>
</dbReference>
<dbReference type="SUPFAM" id="SSF56235">
    <property type="entry name" value="N-terminal nucleophile aminohydrolases (Ntn hydrolases)"/>
    <property type="match status" value="1"/>
</dbReference>
<dbReference type="PROSITE" id="PS51278">
    <property type="entry name" value="GATASE_TYPE_2"/>
    <property type="match status" value="1"/>
</dbReference>
<comment type="function">
    <text>Asparagine synthetase involved in sporulation.</text>
</comment>
<comment type="catalytic activity">
    <reaction>
        <text>L-aspartate + L-glutamine + ATP + H2O = L-asparagine + L-glutamate + AMP + diphosphate + H(+)</text>
        <dbReference type="Rhea" id="RHEA:12228"/>
        <dbReference type="ChEBI" id="CHEBI:15377"/>
        <dbReference type="ChEBI" id="CHEBI:15378"/>
        <dbReference type="ChEBI" id="CHEBI:29985"/>
        <dbReference type="ChEBI" id="CHEBI:29991"/>
        <dbReference type="ChEBI" id="CHEBI:30616"/>
        <dbReference type="ChEBI" id="CHEBI:33019"/>
        <dbReference type="ChEBI" id="CHEBI:58048"/>
        <dbReference type="ChEBI" id="CHEBI:58359"/>
        <dbReference type="ChEBI" id="CHEBI:456215"/>
        <dbReference type="EC" id="6.3.5.4"/>
    </reaction>
</comment>
<comment type="pathway">
    <text>Amino-acid biosynthesis; L-asparagine biosynthesis; L-asparagine from L-aspartate (L-Gln route): step 1/1.</text>
</comment>
<comment type="similarity">
    <text evidence="3">Belongs to the asparagine synthetase family.</text>
</comment>
<comment type="sequence caution" evidence="3">
    <conflict type="erroneous initiation">
        <sequence resource="EMBL-CDS" id="CAA70643"/>
    </conflict>
</comment>
<keyword id="KW-0028">Amino-acid biosynthesis</keyword>
<keyword id="KW-0061">Asparagine biosynthesis</keyword>
<keyword id="KW-0067">ATP-binding</keyword>
<keyword id="KW-0315">Glutamine amidotransferase</keyword>
<keyword id="KW-0436">Ligase</keyword>
<keyword id="KW-0547">Nucleotide-binding</keyword>
<keyword id="KW-1185">Reference proteome</keyword>
<keyword id="KW-0749">Sporulation</keyword>
<proteinExistence type="evidence at protein level"/>
<sequence length="614" mass="70714">MCGITGWVDFKKQLVQEKQTMDRMTDTLSKRGPDDSNVWGEHHVLFGHKRLAVVDIEGGRQPMACTYKGDTYTIIYNGELYNTEDLRKELRARGHQFERTSDTEVLLHSYIEWQEDCVDHLNGIFAFAVWDEKRNLLFAARDRLGVKPFFYTKEGSSFLFGSEIKAILAHPDIKARVDRTGLSEIFGLGPSRTPGTGIFKGIKEIRPAHALTFSKDGLNIWRYWNVESEKHTDSFDDTVANVRSLFQDAVTRQLVSDVPVCTFLSGGLDSSAITAIAAGHFEKEGKAPLHTYSIDYEENDKYFQASAFQPNDDGPWIEKMTEAFGTTHHKCVISQKDLVDHLEEAVLVKDLPGMADVDSSLLWFCREIKKDFVVSLSGECADEIFGGYPWFHTADVESGFPWMRSTEERIKLLSDSWQKKLNLKEYVNAKYEETLAETPLLDGETGVDKARRQLFYLNMLWFMTNLLDRKDRMSMGASLEVRVPFADHRLVEYVWNIPWEMKMHDNREKGILRKALEGILPDDILYRKKSPYPKTHHPEYTKGVSEWLKTIRSQKDSVLHTLLDRKQLDQLLETEGSSFKVPWFGQLMKGPQLIAHLAQIHTWFEAYRIDIDER</sequence>
<accession>O05272</accession>
<reference key="1">
    <citation type="submission" date="1997-04" db="EMBL/GenBank/DDBJ databases">
        <title>Bacillus subtilis genome project, DNA sequence from yucA to yucH.</title>
        <authorList>
            <person name="Oudega B."/>
            <person name="Koningstein G."/>
            <person name="Duesterhoeft A."/>
        </authorList>
    </citation>
    <scope>NUCLEOTIDE SEQUENCE [GENOMIC DNA]</scope>
    <source>
        <strain>168</strain>
    </source>
</reference>
<reference key="2">
    <citation type="journal article" date="1997" name="Microbiology">
        <title>Sequencing of regions downstream of addA (98 degrees) and citG (289 degrees) in Bacillus subtilis.</title>
        <authorList>
            <person name="Medina N."/>
            <person name="Vannier F."/>
            <person name="Roche B."/>
            <person name="Autret S."/>
            <person name="Levine A."/>
            <person name="Seror S.J."/>
        </authorList>
    </citation>
    <scope>NUCLEOTIDE SEQUENCE [GENOMIC DNA]</scope>
    <source>
        <strain>168</strain>
    </source>
</reference>
<reference key="3">
    <citation type="journal article" date="1997" name="Nature">
        <title>The complete genome sequence of the Gram-positive bacterium Bacillus subtilis.</title>
        <authorList>
            <person name="Kunst F."/>
            <person name="Ogasawara N."/>
            <person name="Moszer I."/>
            <person name="Albertini A.M."/>
            <person name="Alloni G."/>
            <person name="Azevedo V."/>
            <person name="Bertero M.G."/>
            <person name="Bessieres P."/>
            <person name="Bolotin A."/>
            <person name="Borchert S."/>
            <person name="Borriss R."/>
            <person name="Boursier L."/>
            <person name="Brans A."/>
            <person name="Braun M."/>
            <person name="Brignell S.C."/>
            <person name="Bron S."/>
            <person name="Brouillet S."/>
            <person name="Bruschi C.V."/>
            <person name="Caldwell B."/>
            <person name="Capuano V."/>
            <person name="Carter N.M."/>
            <person name="Choi S.-K."/>
            <person name="Codani J.-J."/>
            <person name="Connerton I.F."/>
            <person name="Cummings N.J."/>
            <person name="Daniel R.A."/>
            <person name="Denizot F."/>
            <person name="Devine K.M."/>
            <person name="Duesterhoeft A."/>
            <person name="Ehrlich S.D."/>
            <person name="Emmerson P.T."/>
            <person name="Entian K.-D."/>
            <person name="Errington J."/>
            <person name="Fabret C."/>
            <person name="Ferrari E."/>
            <person name="Foulger D."/>
            <person name="Fritz C."/>
            <person name="Fujita M."/>
            <person name="Fujita Y."/>
            <person name="Fuma S."/>
            <person name="Galizzi A."/>
            <person name="Galleron N."/>
            <person name="Ghim S.-Y."/>
            <person name="Glaser P."/>
            <person name="Goffeau A."/>
            <person name="Golightly E.J."/>
            <person name="Grandi G."/>
            <person name="Guiseppi G."/>
            <person name="Guy B.J."/>
            <person name="Haga K."/>
            <person name="Haiech J."/>
            <person name="Harwood C.R."/>
            <person name="Henaut A."/>
            <person name="Hilbert H."/>
            <person name="Holsappel S."/>
            <person name="Hosono S."/>
            <person name="Hullo M.-F."/>
            <person name="Itaya M."/>
            <person name="Jones L.-M."/>
            <person name="Joris B."/>
            <person name="Karamata D."/>
            <person name="Kasahara Y."/>
            <person name="Klaerr-Blanchard M."/>
            <person name="Klein C."/>
            <person name="Kobayashi Y."/>
            <person name="Koetter P."/>
            <person name="Koningstein G."/>
            <person name="Krogh S."/>
            <person name="Kumano M."/>
            <person name="Kurita K."/>
            <person name="Lapidus A."/>
            <person name="Lardinois S."/>
            <person name="Lauber J."/>
            <person name="Lazarevic V."/>
            <person name="Lee S.-M."/>
            <person name="Levine A."/>
            <person name="Liu H."/>
            <person name="Masuda S."/>
            <person name="Mauel C."/>
            <person name="Medigue C."/>
            <person name="Medina N."/>
            <person name="Mellado R.P."/>
            <person name="Mizuno M."/>
            <person name="Moestl D."/>
            <person name="Nakai S."/>
            <person name="Noback M."/>
            <person name="Noone D."/>
            <person name="O'Reilly M."/>
            <person name="Ogawa K."/>
            <person name="Ogiwara A."/>
            <person name="Oudega B."/>
            <person name="Park S.-H."/>
            <person name="Parro V."/>
            <person name="Pohl T.M."/>
            <person name="Portetelle D."/>
            <person name="Porwollik S."/>
            <person name="Prescott A.M."/>
            <person name="Presecan E."/>
            <person name="Pujic P."/>
            <person name="Purnelle B."/>
            <person name="Rapoport G."/>
            <person name="Rey M."/>
            <person name="Reynolds S."/>
            <person name="Rieger M."/>
            <person name="Rivolta C."/>
            <person name="Rocha E."/>
            <person name="Roche B."/>
            <person name="Rose M."/>
            <person name="Sadaie Y."/>
            <person name="Sato T."/>
            <person name="Scanlan E."/>
            <person name="Schleich S."/>
            <person name="Schroeter R."/>
            <person name="Scoffone F."/>
            <person name="Sekiguchi J."/>
            <person name="Sekowska A."/>
            <person name="Seror S.J."/>
            <person name="Serror P."/>
            <person name="Shin B.-S."/>
            <person name="Soldo B."/>
            <person name="Sorokin A."/>
            <person name="Tacconi E."/>
            <person name="Takagi T."/>
            <person name="Takahashi H."/>
            <person name="Takemaru K."/>
            <person name="Takeuchi M."/>
            <person name="Tamakoshi A."/>
            <person name="Tanaka T."/>
            <person name="Terpstra P."/>
            <person name="Tognoni A."/>
            <person name="Tosato V."/>
            <person name="Uchiyama S."/>
            <person name="Vandenbol M."/>
            <person name="Vannier F."/>
            <person name="Vassarotti A."/>
            <person name="Viari A."/>
            <person name="Wambutt R."/>
            <person name="Wedler E."/>
            <person name="Wedler H."/>
            <person name="Weitzenegger T."/>
            <person name="Winters P."/>
            <person name="Wipat A."/>
            <person name="Yamamoto H."/>
            <person name="Yamane K."/>
            <person name="Yasumoto K."/>
            <person name="Yata K."/>
            <person name="Yoshida K."/>
            <person name="Yoshikawa H.-F."/>
            <person name="Zumstein E."/>
            <person name="Yoshikawa H."/>
            <person name="Danchin A."/>
        </authorList>
    </citation>
    <scope>NUCLEOTIDE SEQUENCE [LARGE SCALE GENOMIC DNA]</scope>
    <source>
        <strain>168</strain>
    </source>
</reference>
<reference key="4">
    <citation type="journal article" date="1999" name="J. Bacteriol.">
        <title>Three asparagine synthetase genes of Bacillus subtilis.</title>
        <authorList>
            <person name="Yoshida K."/>
            <person name="Fujita Y."/>
            <person name="Ehrlich S.D."/>
        </authorList>
    </citation>
    <scope>CHARACTERIZATION</scope>
</reference>